<proteinExistence type="inferred from homology"/>
<evidence type="ECO:0000250" key="1"/>
<evidence type="ECO:0000305" key="2"/>
<geneLocation type="chloroplast"/>
<feature type="chain" id="PRO_0000290974" description="Small ribosomal subunit protein uS8c">
    <location>
        <begin position="1"/>
        <end position="132"/>
    </location>
</feature>
<keyword id="KW-0150">Chloroplast</keyword>
<keyword id="KW-0934">Plastid</keyword>
<keyword id="KW-0687">Ribonucleoprotein</keyword>
<keyword id="KW-0689">Ribosomal protein</keyword>
<keyword id="KW-0694">RNA-binding</keyword>
<keyword id="KW-0699">rRNA-binding</keyword>
<dbReference type="EMBL" id="DQ821119">
    <property type="protein sequence ID" value="ABG79636.1"/>
    <property type="molecule type" value="Genomic_DNA"/>
</dbReference>
<dbReference type="RefSeq" id="YP_001023737.1">
    <property type="nucleotide sequence ID" value="NC_008829.1"/>
</dbReference>
<dbReference type="SMR" id="A2T369"/>
<dbReference type="GeneID" id="4788265"/>
<dbReference type="GO" id="GO:0009507">
    <property type="term" value="C:chloroplast"/>
    <property type="evidence" value="ECO:0007669"/>
    <property type="project" value="UniProtKB-SubCell"/>
</dbReference>
<dbReference type="GO" id="GO:1990904">
    <property type="term" value="C:ribonucleoprotein complex"/>
    <property type="evidence" value="ECO:0007669"/>
    <property type="project" value="UniProtKB-KW"/>
</dbReference>
<dbReference type="GO" id="GO:0005840">
    <property type="term" value="C:ribosome"/>
    <property type="evidence" value="ECO:0007669"/>
    <property type="project" value="UniProtKB-KW"/>
</dbReference>
<dbReference type="GO" id="GO:0019843">
    <property type="term" value="F:rRNA binding"/>
    <property type="evidence" value="ECO:0007669"/>
    <property type="project" value="UniProtKB-UniRule"/>
</dbReference>
<dbReference type="GO" id="GO:0003735">
    <property type="term" value="F:structural constituent of ribosome"/>
    <property type="evidence" value="ECO:0007669"/>
    <property type="project" value="InterPro"/>
</dbReference>
<dbReference type="GO" id="GO:0006412">
    <property type="term" value="P:translation"/>
    <property type="evidence" value="ECO:0007669"/>
    <property type="project" value="UniProtKB-UniRule"/>
</dbReference>
<dbReference type="FunFam" id="3.30.1490.10:FF:000001">
    <property type="entry name" value="30S ribosomal protein S8"/>
    <property type="match status" value="1"/>
</dbReference>
<dbReference type="Gene3D" id="3.30.1370.30">
    <property type="match status" value="1"/>
</dbReference>
<dbReference type="Gene3D" id="3.30.1490.10">
    <property type="match status" value="1"/>
</dbReference>
<dbReference type="HAMAP" id="MF_01302_B">
    <property type="entry name" value="Ribosomal_uS8_B"/>
    <property type="match status" value="1"/>
</dbReference>
<dbReference type="InterPro" id="IPR000630">
    <property type="entry name" value="Ribosomal_uS8"/>
</dbReference>
<dbReference type="InterPro" id="IPR047863">
    <property type="entry name" value="Ribosomal_uS8_CS"/>
</dbReference>
<dbReference type="InterPro" id="IPR035987">
    <property type="entry name" value="Ribosomal_uS8_sf"/>
</dbReference>
<dbReference type="NCBIfam" id="NF001109">
    <property type="entry name" value="PRK00136.1"/>
    <property type="match status" value="1"/>
</dbReference>
<dbReference type="PANTHER" id="PTHR11758">
    <property type="entry name" value="40S RIBOSOMAL PROTEIN S15A"/>
    <property type="match status" value="1"/>
</dbReference>
<dbReference type="Pfam" id="PF00410">
    <property type="entry name" value="Ribosomal_S8"/>
    <property type="match status" value="1"/>
</dbReference>
<dbReference type="SUPFAM" id="SSF56047">
    <property type="entry name" value="Ribosomal protein S8"/>
    <property type="match status" value="1"/>
</dbReference>
<dbReference type="PROSITE" id="PS00053">
    <property type="entry name" value="RIBOSOMAL_S8"/>
    <property type="match status" value="1"/>
</dbReference>
<name>RR8_ANGEV</name>
<protein>
    <recommendedName>
        <fullName evidence="2">Small ribosomal subunit protein uS8c</fullName>
    </recommendedName>
    <alternativeName>
        <fullName>30S ribosomal protein S8, chloroplastic</fullName>
    </alternativeName>
</protein>
<organism>
    <name type="scientific">Angiopteris evecta</name>
    <name type="common">Mule's foot fern</name>
    <name type="synonym">Polypodium evectum</name>
    <dbReference type="NCBI Taxonomy" id="13825"/>
    <lineage>
        <taxon>Eukaryota</taxon>
        <taxon>Viridiplantae</taxon>
        <taxon>Streptophyta</taxon>
        <taxon>Embryophyta</taxon>
        <taxon>Tracheophyta</taxon>
        <taxon>Polypodiopsida</taxon>
        <taxon>Marattiidae</taxon>
        <taxon>Marattiales</taxon>
        <taxon>Marattiaceae</taxon>
        <taxon>Angiopteris</taxon>
    </lineage>
</organism>
<accession>A2T369</accession>
<comment type="function">
    <text evidence="1">One of the primary rRNA binding proteins, it binds directly to 16S rRNA central domain where it helps coordinate assembly of the platform of the 30S subunit.</text>
</comment>
<comment type="subunit">
    <text evidence="1">Part of the 30S ribosomal subunit.</text>
</comment>
<comment type="subcellular location">
    <subcellularLocation>
        <location>Plastid</location>
        <location>Chloroplast</location>
    </subcellularLocation>
</comment>
<comment type="similarity">
    <text evidence="2">Belongs to the universal ribosomal protein uS8 family.</text>
</comment>
<gene>
    <name type="primary">rps8</name>
</gene>
<sequence>MVNDTVANMITSIRNANVIEATTVRIPATNTTKDVGKILLQEGFITNLREHKENTRSFLILTLKYRGRKKKPYITNLKRISKPGLRIYSNHREIPKVLGGMGIVILSTSSGIVTDREARQKQIGGEILCYVW</sequence>
<reference key="1">
    <citation type="journal article" date="2007" name="Am. Fern J.">
        <title>The complete plastid genome sequence of Angiopteris evecta (G. Forst.) Hoffm. (Marattiaceae).</title>
        <authorList>
            <person name="Roper J.M."/>
            <person name="Hansen S.K."/>
            <person name="Wolf P.G."/>
            <person name="Karol K.G."/>
            <person name="Mandoli D.F."/>
            <person name="Everett K.D.E."/>
            <person name="Kuehl J.V."/>
            <person name="Boore J.L."/>
        </authorList>
    </citation>
    <scope>NUCLEOTIDE SEQUENCE [LARGE SCALE GENOMIC DNA]</scope>
</reference>